<comment type="function">
    <text evidence="1">NDH-1 shuttles electrons from an unknown electron donor, via FMN and iron-sulfur (Fe-S) centers, to quinones in the respiratory and/or the photosynthetic chain. The immediate electron acceptor for the enzyme in this species is believed to be plastoquinone. Couples the redox reaction to proton translocation, and thus conserves the redox energy in a proton gradient. Cyanobacterial NDH-1 also plays a role in inorganic carbon-concentration.</text>
</comment>
<comment type="catalytic activity">
    <reaction evidence="1">
        <text>a plastoquinone + NADH + (n+1) H(+)(in) = a plastoquinol + NAD(+) + n H(+)(out)</text>
        <dbReference type="Rhea" id="RHEA:42608"/>
        <dbReference type="Rhea" id="RHEA-COMP:9561"/>
        <dbReference type="Rhea" id="RHEA-COMP:9562"/>
        <dbReference type="ChEBI" id="CHEBI:15378"/>
        <dbReference type="ChEBI" id="CHEBI:17757"/>
        <dbReference type="ChEBI" id="CHEBI:57540"/>
        <dbReference type="ChEBI" id="CHEBI:57945"/>
        <dbReference type="ChEBI" id="CHEBI:62192"/>
    </reaction>
</comment>
<comment type="catalytic activity">
    <reaction evidence="1">
        <text>a plastoquinone + NADPH + (n+1) H(+)(in) = a plastoquinol + NADP(+) + n H(+)(out)</text>
        <dbReference type="Rhea" id="RHEA:42612"/>
        <dbReference type="Rhea" id="RHEA-COMP:9561"/>
        <dbReference type="Rhea" id="RHEA-COMP:9562"/>
        <dbReference type="ChEBI" id="CHEBI:15378"/>
        <dbReference type="ChEBI" id="CHEBI:17757"/>
        <dbReference type="ChEBI" id="CHEBI:57783"/>
        <dbReference type="ChEBI" id="CHEBI:58349"/>
        <dbReference type="ChEBI" id="CHEBI:62192"/>
    </reaction>
</comment>
<comment type="subunit">
    <text evidence="1">NDH-1 can be composed of about 15 different subunits; different subcomplexes with different compositions have been identified which probably have different functions.</text>
</comment>
<comment type="subcellular location">
    <subcellularLocation>
        <location evidence="1">Cellular thylakoid membrane</location>
        <topology evidence="1">Peripheral membrane protein</topology>
        <orientation evidence="1">Cytoplasmic side</orientation>
    </subcellularLocation>
</comment>
<comment type="similarity">
    <text evidence="1">Belongs to the complex I 30 kDa subunit family.</text>
</comment>
<sequence length="172" mass="19819">MPEELTPTPETAVVEAGPVSRWLSENGFENTALERDHLGVEIVQVDREVLLPIAAALFAYGFNYLQCQGGYDLGPGQDLVSFYHLTKVSDDASQPQEVRVKVFLPRHDPKVPSVFWIWKGADWQERETFDMYGIQFEGHPNLKRILMPEDWVGWPLRKDYISPDFYELQDAY</sequence>
<accession>Q31P07</accession>
<reference key="1">
    <citation type="submission" date="2005-08" db="EMBL/GenBank/DDBJ databases">
        <title>Complete sequence of chromosome 1 of Synechococcus elongatus PCC 7942.</title>
        <authorList>
            <consortium name="US DOE Joint Genome Institute"/>
            <person name="Copeland A."/>
            <person name="Lucas S."/>
            <person name="Lapidus A."/>
            <person name="Barry K."/>
            <person name="Detter J.C."/>
            <person name="Glavina T."/>
            <person name="Hammon N."/>
            <person name="Israni S."/>
            <person name="Pitluck S."/>
            <person name="Schmutz J."/>
            <person name="Larimer F."/>
            <person name="Land M."/>
            <person name="Kyrpides N."/>
            <person name="Lykidis A."/>
            <person name="Golden S."/>
            <person name="Richardson P."/>
        </authorList>
    </citation>
    <scope>NUCLEOTIDE SEQUENCE [LARGE SCALE GENOMIC DNA]</scope>
    <source>
        <strain>ATCC 33912 / PCC 7942 / FACHB-805</strain>
    </source>
</reference>
<name>NDHJ_SYNE7</name>
<organism>
    <name type="scientific">Synechococcus elongatus (strain ATCC 33912 / PCC 7942 / FACHB-805)</name>
    <name type="common">Anacystis nidulans R2</name>
    <dbReference type="NCBI Taxonomy" id="1140"/>
    <lineage>
        <taxon>Bacteria</taxon>
        <taxon>Bacillati</taxon>
        <taxon>Cyanobacteriota</taxon>
        <taxon>Cyanophyceae</taxon>
        <taxon>Synechococcales</taxon>
        <taxon>Synechococcaceae</taxon>
        <taxon>Synechococcus</taxon>
    </lineage>
</organism>
<proteinExistence type="inferred from homology"/>
<dbReference type="EC" id="7.1.1.-" evidence="1"/>
<dbReference type="EMBL" id="CP000100">
    <property type="protein sequence ID" value="ABB57212.1"/>
    <property type="molecule type" value="Genomic_DNA"/>
</dbReference>
<dbReference type="RefSeq" id="WP_011377903.1">
    <property type="nucleotide sequence ID" value="NZ_JACJTX010000003.1"/>
</dbReference>
<dbReference type="SMR" id="Q31P07"/>
<dbReference type="STRING" id="1140.Synpcc7942_1182"/>
<dbReference type="PaxDb" id="1140-Synpcc7942_1182"/>
<dbReference type="KEGG" id="syf:Synpcc7942_1182"/>
<dbReference type="eggNOG" id="COG0852">
    <property type="taxonomic scope" value="Bacteria"/>
</dbReference>
<dbReference type="HOGENOM" id="CLU_042628_9_1_3"/>
<dbReference type="OrthoDB" id="9803286at2"/>
<dbReference type="BioCyc" id="MetaCyc:SYNPCC7942_1182-MONOMER"/>
<dbReference type="BioCyc" id="SYNEL:SYNPCC7942_1182-MONOMER"/>
<dbReference type="Proteomes" id="UP000889800">
    <property type="component" value="Chromosome"/>
</dbReference>
<dbReference type="GO" id="GO:0031676">
    <property type="term" value="C:plasma membrane-derived thylakoid membrane"/>
    <property type="evidence" value="ECO:0007669"/>
    <property type="project" value="UniProtKB-SubCell"/>
</dbReference>
<dbReference type="GO" id="GO:0008137">
    <property type="term" value="F:NADH dehydrogenase (ubiquinone) activity"/>
    <property type="evidence" value="ECO:0007669"/>
    <property type="project" value="InterPro"/>
</dbReference>
<dbReference type="GO" id="GO:0048038">
    <property type="term" value="F:quinone binding"/>
    <property type="evidence" value="ECO:0007669"/>
    <property type="project" value="UniProtKB-KW"/>
</dbReference>
<dbReference type="GO" id="GO:0019684">
    <property type="term" value="P:photosynthesis, light reaction"/>
    <property type="evidence" value="ECO:0007669"/>
    <property type="project" value="UniProtKB-UniRule"/>
</dbReference>
<dbReference type="Gene3D" id="3.30.460.80">
    <property type="entry name" value="NADH:ubiquinone oxidoreductase, 30kDa subunit"/>
    <property type="match status" value="1"/>
</dbReference>
<dbReference type="HAMAP" id="MF_01357">
    <property type="entry name" value="NDH1_NuoC"/>
    <property type="match status" value="1"/>
</dbReference>
<dbReference type="InterPro" id="IPR010218">
    <property type="entry name" value="NADH_DH_suC"/>
</dbReference>
<dbReference type="InterPro" id="IPR037232">
    <property type="entry name" value="NADH_quin_OxRdtase_su_C/D-like"/>
</dbReference>
<dbReference type="InterPro" id="IPR001268">
    <property type="entry name" value="NADH_UbQ_OxRdtase_30kDa_su"/>
</dbReference>
<dbReference type="InterPro" id="IPR020396">
    <property type="entry name" value="NADH_UbQ_OxRdtase_CS"/>
</dbReference>
<dbReference type="NCBIfam" id="NF009141">
    <property type="entry name" value="PRK12494.1"/>
    <property type="match status" value="1"/>
</dbReference>
<dbReference type="PANTHER" id="PTHR10884:SF14">
    <property type="entry name" value="NADH DEHYDROGENASE [UBIQUINONE] IRON-SULFUR PROTEIN 3, MITOCHONDRIAL"/>
    <property type="match status" value="1"/>
</dbReference>
<dbReference type="PANTHER" id="PTHR10884">
    <property type="entry name" value="NADH DEHYDROGENASE UBIQUINONE IRON-SULFUR PROTEIN 3"/>
    <property type="match status" value="1"/>
</dbReference>
<dbReference type="Pfam" id="PF00329">
    <property type="entry name" value="Complex1_30kDa"/>
    <property type="match status" value="1"/>
</dbReference>
<dbReference type="SUPFAM" id="SSF143243">
    <property type="entry name" value="Nqo5-like"/>
    <property type="match status" value="1"/>
</dbReference>
<dbReference type="PROSITE" id="PS00542">
    <property type="entry name" value="COMPLEX1_30K"/>
    <property type="match status" value="1"/>
</dbReference>
<evidence type="ECO:0000255" key="1">
    <source>
        <dbReference type="HAMAP-Rule" id="MF_01357"/>
    </source>
</evidence>
<feature type="chain" id="PRO_0000358203" description="NAD(P)H-quinone oxidoreductase subunit J">
    <location>
        <begin position="1"/>
        <end position="172"/>
    </location>
</feature>
<gene>
    <name evidence="1" type="primary">ndhJ</name>
    <name type="ordered locus">Synpcc7942_1182</name>
</gene>
<protein>
    <recommendedName>
        <fullName evidence="1">NAD(P)H-quinone oxidoreductase subunit J</fullName>
        <ecNumber evidence="1">7.1.1.-</ecNumber>
    </recommendedName>
    <alternativeName>
        <fullName>NAD(P)H dehydrogenase subunit J</fullName>
    </alternativeName>
    <alternativeName>
        <fullName evidence="1">NADH-plastoquinone oxidoreductase subunit J</fullName>
    </alternativeName>
    <alternativeName>
        <fullName evidence="1">NDH-1 subunit J</fullName>
        <shortName evidence="1">NDH-J</shortName>
    </alternativeName>
</protein>
<keyword id="KW-0472">Membrane</keyword>
<keyword id="KW-0520">NAD</keyword>
<keyword id="KW-0521">NADP</keyword>
<keyword id="KW-0618">Plastoquinone</keyword>
<keyword id="KW-0874">Quinone</keyword>
<keyword id="KW-1185">Reference proteome</keyword>
<keyword id="KW-0793">Thylakoid</keyword>
<keyword id="KW-1278">Translocase</keyword>
<keyword id="KW-0813">Transport</keyword>